<dbReference type="EMBL" id="CP000713">
    <property type="protein sequence ID" value="ABQ92999.1"/>
    <property type="molecule type" value="Genomic_DNA"/>
</dbReference>
<dbReference type="SMR" id="A5WBF8"/>
<dbReference type="STRING" id="349106.PsycPRwf_0039"/>
<dbReference type="KEGG" id="prw:PsycPRwf_0039"/>
<dbReference type="eggNOG" id="COG0484">
    <property type="taxonomic scope" value="Bacteria"/>
</dbReference>
<dbReference type="HOGENOM" id="CLU_017633_0_7_6"/>
<dbReference type="GO" id="GO:0005737">
    <property type="term" value="C:cytoplasm"/>
    <property type="evidence" value="ECO:0007669"/>
    <property type="project" value="UniProtKB-SubCell"/>
</dbReference>
<dbReference type="GO" id="GO:0005524">
    <property type="term" value="F:ATP binding"/>
    <property type="evidence" value="ECO:0007669"/>
    <property type="project" value="InterPro"/>
</dbReference>
<dbReference type="GO" id="GO:0031072">
    <property type="term" value="F:heat shock protein binding"/>
    <property type="evidence" value="ECO:0007669"/>
    <property type="project" value="InterPro"/>
</dbReference>
<dbReference type="GO" id="GO:0051082">
    <property type="term" value="F:unfolded protein binding"/>
    <property type="evidence" value="ECO:0007669"/>
    <property type="project" value="UniProtKB-UniRule"/>
</dbReference>
<dbReference type="GO" id="GO:0008270">
    <property type="term" value="F:zinc ion binding"/>
    <property type="evidence" value="ECO:0007669"/>
    <property type="project" value="UniProtKB-UniRule"/>
</dbReference>
<dbReference type="GO" id="GO:0051085">
    <property type="term" value="P:chaperone cofactor-dependent protein refolding"/>
    <property type="evidence" value="ECO:0007669"/>
    <property type="project" value="TreeGrafter"/>
</dbReference>
<dbReference type="GO" id="GO:0006260">
    <property type="term" value="P:DNA replication"/>
    <property type="evidence" value="ECO:0007669"/>
    <property type="project" value="UniProtKB-KW"/>
</dbReference>
<dbReference type="GO" id="GO:0042026">
    <property type="term" value="P:protein refolding"/>
    <property type="evidence" value="ECO:0007669"/>
    <property type="project" value="TreeGrafter"/>
</dbReference>
<dbReference type="GO" id="GO:0009408">
    <property type="term" value="P:response to heat"/>
    <property type="evidence" value="ECO:0007669"/>
    <property type="project" value="InterPro"/>
</dbReference>
<dbReference type="CDD" id="cd06257">
    <property type="entry name" value="DnaJ"/>
    <property type="match status" value="1"/>
</dbReference>
<dbReference type="CDD" id="cd10747">
    <property type="entry name" value="DnaJ_C"/>
    <property type="match status" value="1"/>
</dbReference>
<dbReference type="CDD" id="cd10719">
    <property type="entry name" value="DnaJ_zf"/>
    <property type="match status" value="1"/>
</dbReference>
<dbReference type="FunFam" id="1.10.287.110:FF:000034">
    <property type="entry name" value="Chaperone protein DnaJ"/>
    <property type="match status" value="1"/>
</dbReference>
<dbReference type="FunFam" id="2.10.230.10:FF:000002">
    <property type="entry name" value="Molecular chaperone DnaJ"/>
    <property type="match status" value="1"/>
</dbReference>
<dbReference type="FunFam" id="2.60.260.20:FF:000004">
    <property type="entry name" value="Molecular chaperone DnaJ"/>
    <property type="match status" value="1"/>
</dbReference>
<dbReference type="Gene3D" id="1.10.287.110">
    <property type="entry name" value="DnaJ domain"/>
    <property type="match status" value="1"/>
</dbReference>
<dbReference type="Gene3D" id="2.10.230.10">
    <property type="entry name" value="Heat shock protein DnaJ, cysteine-rich domain"/>
    <property type="match status" value="1"/>
</dbReference>
<dbReference type="Gene3D" id="2.60.260.20">
    <property type="entry name" value="Urease metallochaperone UreE, N-terminal domain"/>
    <property type="match status" value="2"/>
</dbReference>
<dbReference type="HAMAP" id="MF_01152">
    <property type="entry name" value="DnaJ"/>
    <property type="match status" value="1"/>
</dbReference>
<dbReference type="InterPro" id="IPR012724">
    <property type="entry name" value="DnaJ"/>
</dbReference>
<dbReference type="InterPro" id="IPR002939">
    <property type="entry name" value="DnaJ_C"/>
</dbReference>
<dbReference type="InterPro" id="IPR001623">
    <property type="entry name" value="DnaJ_domain"/>
</dbReference>
<dbReference type="InterPro" id="IPR018253">
    <property type="entry name" value="DnaJ_domain_CS"/>
</dbReference>
<dbReference type="InterPro" id="IPR008971">
    <property type="entry name" value="HSP40/DnaJ_pept-bd"/>
</dbReference>
<dbReference type="InterPro" id="IPR001305">
    <property type="entry name" value="HSP_DnaJ_Cys-rich_dom"/>
</dbReference>
<dbReference type="InterPro" id="IPR036410">
    <property type="entry name" value="HSP_DnaJ_Cys-rich_dom_sf"/>
</dbReference>
<dbReference type="InterPro" id="IPR036869">
    <property type="entry name" value="J_dom_sf"/>
</dbReference>
<dbReference type="NCBIfam" id="TIGR02349">
    <property type="entry name" value="DnaJ_bact"/>
    <property type="match status" value="1"/>
</dbReference>
<dbReference type="NCBIfam" id="NF008035">
    <property type="entry name" value="PRK10767.1"/>
    <property type="match status" value="1"/>
</dbReference>
<dbReference type="PANTHER" id="PTHR43096:SF48">
    <property type="entry name" value="CHAPERONE PROTEIN DNAJ"/>
    <property type="match status" value="1"/>
</dbReference>
<dbReference type="PANTHER" id="PTHR43096">
    <property type="entry name" value="DNAJ HOMOLOG 1, MITOCHONDRIAL-RELATED"/>
    <property type="match status" value="1"/>
</dbReference>
<dbReference type="Pfam" id="PF00226">
    <property type="entry name" value="DnaJ"/>
    <property type="match status" value="1"/>
</dbReference>
<dbReference type="Pfam" id="PF01556">
    <property type="entry name" value="DnaJ_C"/>
    <property type="match status" value="1"/>
</dbReference>
<dbReference type="Pfam" id="PF00684">
    <property type="entry name" value="DnaJ_CXXCXGXG"/>
    <property type="match status" value="1"/>
</dbReference>
<dbReference type="PRINTS" id="PR00625">
    <property type="entry name" value="JDOMAIN"/>
</dbReference>
<dbReference type="SMART" id="SM00271">
    <property type="entry name" value="DnaJ"/>
    <property type="match status" value="1"/>
</dbReference>
<dbReference type="SUPFAM" id="SSF46565">
    <property type="entry name" value="Chaperone J-domain"/>
    <property type="match status" value="1"/>
</dbReference>
<dbReference type="SUPFAM" id="SSF57938">
    <property type="entry name" value="DnaJ/Hsp40 cysteine-rich domain"/>
    <property type="match status" value="1"/>
</dbReference>
<dbReference type="SUPFAM" id="SSF49493">
    <property type="entry name" value="HSP40/DnaJ peptide-binding domain"/>
    <property type="match status" value="2"/>
</dbReference>
<dbReference type="PROSITE" id="PS00636">
    <property type="entry name" value="DNAJ_1"/>
    <property type="match status" value="1"/>
</dbReference>
<dbReference type="PROSITE" id="PS50076">
    <property type="entry name" value="DNAJ_2"/>
    <property type="match status" value="1"/>
</dbReference>
<dbReference type="PROSITE" id="PS51188">
    <property type="entry name" value="ZF_CR"/>
    <property type="match status" value="1"/>
</dbReference>
<protein>
    <recommendedName>
        <fullName evidence="1">Chaperone protein DnaJ</fullName>
    </recommendedName>
</protein>
<accession>A5WBF8</accession>
<reference key="1">
    <citation type="submission" date="2007-05" db="EMBL/GenBank/DDBJ databases">
        <title>Complete sequence of chromosome of Psychrobacter sp. PRwf-1.</title>
        <authorList>
            <consortium name="US DOE Joint Genome Institute"/>
            <person name="Copeland A."/>
            <person name="Lucas S."/>
            <person name="Lapidus A."/>
            <person name="Barry K."/>
            <person name="Detter J.C."/>
            <person name="Glavina del Rio T."/>
            <person name="Hammon N."/>
            <person name="Israni S."/>
            <person name="Dalin E."/>
            <person name="Tice H."/>
            <person name="Pitluck S."/>
            <person name="Chain P."/>
            <person name="Malfatti S."/>
            <person name="Shin M."/>
            <person name="Vergez L."/>
            <person name="Schmutz J."/>
            <person name="Larimer F."/>
            <person name="Land M."/>
            <person name="Hauser L."/>
            <person name="Kyrpides N."/>
            <person name="Kim E."/>
            <person name="Tiedje J."/>
            <person name="Richardson P."/>
        </authorList>
    </citation>
    <scope>NUCLEOTIDE SEQUENCE [LARGE SCALE GENOMIC DNA]</scope>
    <source>
        <strain>PRwf-1</strain>
    </source>
</reference>
<comment type="function">
    <text evidence="1">Participates actively in the response to hyperosmotic and heat shock by preventing the aggregation of stress-denatured proteins and by disaggregating proteins, also in an autonomous, DnaK-independent fashion. Unfolded proteins bind initially to DnaJ; upon interaction with the DnaJ-bound protein, DnaK hydrolyzes its bound ATP, resulting in the formation of a stable complex. GrpE releases ADP from DnaK; ATP binding to DnaK triggers the release of the substrate protein, thus completing the reaction cycle. Several rounds of ATP-dependent interactions between DnaJ, DnaK and GrpE are required for fully efficient folding. Also involved, together with DnaK and GrpE, in the DNA replication of plasmids through activation of initiation proteins.</text>
</comment>
<comment type="cofactor">
    <cofactor evidence="1">
        <name>Zn(2+)</name>
        <dbReference type="ChEBI" id="CHEBI:29105"/>
    </cofactor>
    <text evidence="1">Binds 2 Zn(2+) ions per monomer.</text>
</comment>
<comment type="subunit">
    <text evidence="1">Homodimer.</text>
</comment>
<comment type="subcellular location">
    <subcellularLocation>
        <location evidence="1">Cytoplasm</location>
    </subcellularLocation>
</comment>
<comment type="domain">
    <text evidence="1">The J domain is necessary and sufficient to stimulate DnaK ATPase activity. Zinc center 1 plays an important role in the autonomous, DnaK-independent chaperone activity of DnaJ. Zinc center 2 is essential for interaction with DnaK and for DnaJ activity.</text>
</comment>
<comment type="similarity">
    <text evidence="1">Belongs to the DnaJ family.</text>
</comment>
<organism>
    <name type="scientific">Psychrobacter sp. (strain PRwf-1)</name>
    <dbReference type="NCBI Taxonomy" id="349106"/>
    <lineage>
        <taxon>Bacteria</taxon>
        <taxon>Pseudomonadati</taxon>
        <taxon>Pseudomonadota</taxon>
        <taxon>Gammaproteobacteria</taxon>
        <taxon>Moraxellales</taxon>
        <taxon>Moraxellaceae</taxon>
        <taxon>Psychrobacter</taxon>
    </lineage>
</organism>
<sequence>MSKRDFYEVLGVDRSADEREIKKAYRKLAMKYHPDRNSDDPDAEEKFKEASMAYEVLSDKEKRSAYDRMGHAAFENGMGGGGFGGAGAGNFQDIFGDIFGNFGDIFGQSRGGGGRQRRGSDLRYVIELSLEEAVRGCKKEISFTAPAPCETCDGKGAKNASDIQTCSTCGGHGQVRMQQGFFAVQQTCPNCGGSGQEIKNPCNDCHGTGVKDKSRTLEVSIPAGVDDGDRVRLAGEGEAGGAGVQNGDLYVEVRVKEHPVFKRQGADLYMDVPVSITDAALGKEVEIPTLDGKVKIKVAEGTQSGKLLRVRGKGVTPVRTTMKGDLICRIMVETPVNLTREQKDLLRQFQDTLDGDSKHHQSPKKKSFFEKLGDLFD</sequence>
<proteinExistence type="inferred from homology"/>
<evidence type="ECO:0000255" key="1">
    <source>
        <dbReference type="HAMAP-Rule" id="MF_01152"/>
    </source>
</evidence>
<evidence type="ECO:0000256" key="2">
    <source>
        <dbReference type="SAM" id="MobiDB-lite"/>
    </source>
</evidence>
<keyword id="KW-0143">Chaperone</keyword>
<keyword id="KW-0963">Cytoplasm</keyword>
<keyword id="KW-0235">DNA replication</keyword>
<keyword id="KW-0479">Metal-binding</keyword>
<keyword id="KW-0677">Repeat</keyword>
<keyword id="KW-0346">Stress response</keyword>
<keyword id="KW-0862">Zinc</keyword>
<keyword id="KW-0863">Zinc-finger</keyword>
<name>DNAJ_PSYWF</name>
<gene>
    <name evidence="1" type="primary">dnaJ</name>
    <name type="ordered locus">PsycPRwf_0039</name>
</gene>
<feature type="chain" id="PRO_1000085260" description="Chaperone protein DnaJ">
    <location>
        <begin position="1"/>
        <end position="377"/>
    </location>
</feature>
<feature type="domain" description="J" evidence="1">
    <location>
        <begin position="5"/>
        <end position="70"/>
    </location>
</feature>
<feature type="repeat" description="CXXCXGXG motif">
    <location>
        <begin position="149"/>
        <end position="156"/>
    </location>
</feature>
<feature type="repeat" description="CXXCXGXG motif">
    <location>
        <begin position="166"/>
        <end position="173"/>
    </location>
</feature>
<feature type="repeat" description="CXXCXGXG motif">
    <location>
        <begin position="188"/>
        <end position="195"/>
    </location>
</feature>
<feature type="repeat" description="CXXCXGXG motif">
    <location>
        <begin position="202"/>
        <end position="209"/>
    </location>
</feature>
<feature type="zinc finger region" description="CR-type" evidence="1">
    <location>
        <begin position="136"/>
        <end position="214"/>
    </location>
</feature>
<feature type="region of interest" description="Disordered" evidence="2">
    <location>
        <begin position="353"/>
        <end position="377"/>
    </location>
</feature>
<feature type="compositionally biased region" description="Basic and acidic residues" evidence="2">
    <location>
        <begin position="367"/>
        <end position="377"/>
    </location>
</feature>
<feature type="binding site" evidence="1">
    <location>
        <position position="149"/>
    </location>
    <ligand>
        <name>Zn(2+)</name>
        <dbReference type="ChEBI" id="CHEBI:29105"/>
        <label>1</label>
    </ligand>
</feature>
<feature type="binding site" evidence="1">
    <location>
        <position position="152"/>
    </location>
    <ligand>
        <name>Zn(2+)</name>
        <dbReference type="ChEBI" id="CHEBI:29105"/>
        <label>1</label>
    </ligand>
</feature>
<feature type="binding site" evidence="1">
    <location>
        <position position="166"/>
    </location>
    <ligand>
        <name>Zn(2+)</name>
        <dbReference type="ChEBI" id="CHEBI:29105"/>
        <label>2</label>
    </ligand>
</feature>
<feature type="binding site" evidence="1">
    <location>
        <position position="169"/>
    </location>
    <ligand>
        <name>Zn(2+)</name>
        <dbReference type="ChEBI" id="CHEBI:29105"/>
        <label>2</label>
    </ligand>
</feature>
<feature type="binding site" evidence="1">
    <location>
        <position position="188"/>
    </location>
    <ligand>
        <name>Zn(2+)</name>
        <dbReference type="ChEBI" id="CHEBI:29105"/>
        <label>2</label>
    </ligand>
</feature>
<feature type="binding site" evidence="1">
    <location>
        <position position="191"/>
    </location>
    <ligand>
        <name>Zn(2+)</name>
        <dbReference type="ChEBI" id="CHEBI:29105"/>
        <label>2</label>
    </ligand>
</feature>
<feature type="binding site" evidence="1">
    <location>
        <position position="202"/>
    </location>
    <ligand>
        <name>Zn(2+)</name>
        <dbReference type="ChEBI" id="CHEBI:29105"/>
        <label>1</label>
    </ligand>
</feature>
<feature type="binding site" evidence="1">
    <location>
        <position position="205"/>
    </location>
    <ligand>
        <name>Zn(2+)</name>
        <dbReference type="ChEBI" id="CHEBI:29105"/>
        <label>1</label>
    </ligand>
</feature>